<comment type="function">
    <text evidence="3">Probable thiol protease.</text>
</comment>
<comment type="subunit">
    <text evidence="12">Interacts with WSCP.</text>
</comment>
<comment type="similarity">
    <text evidence="13">Belongs to the peptidase C1 family.</text>
</comment>
<protein>
    <recommendedName>
        <fullName evidence="13">Probable cysteine protease RD21C</fullName>
        <ecNumber evidence="4">3.4.22.-</ecNumber>
    </recommendedName>
</protein>
<organism>
    <name type="scientific">Arabidopsis thaliana</name>
    <name type="common">Mouse-ear cress</name>
    <dbReference type="NCBI Taxonomy" id="3702"/>
    <lineage>
        <taxon>Eukaryota</taxon>
        <taxon>Viridiplantae</taxon>
        <taxon>Streptophyta</taxon>
        <taxon>Embryophyta</taxon>
        <taxon>Tracheophyta</taxon>
        <taxon>Spermatophyta</taxon>
        <taxon>Magnoliopsida</taxon>
        <taxon>eudicotyledons</taxon>
        <taxon>Gunneridae</taxon>
        <taxon>Pentapetalae</taxon>
        <taxon>rosids</taxon>
        <taxon>malvids</taxon>
        <taxon>Brassicales</taxon>
        <taxon>Brassicaceae</taxon>
        <taxon>Camelineae</taxon>
        <taxon>Arabidopsis</taxon>
    </lineage>
</organism>
<gene>
    <name evidence="13" type="primary">RD21C</name>
    <name evidence="14" type="ordered locus">At3g19390</name>
    <name evidence="15" type="ORF">MLD14.12</name>
</gene>
<dbReference type="EC" id="3.4.22.-" evidence="4"/>
<dbReference type="EMBL" id="AB025624">
    <property type="protein sequence ID" value="BAB02463.1"/>
    <property type="molecule type" value="Genomic_DNA"/>
</dbReference>
<dbReference type="EMBL" id="CP002686">
    <property type="protein sequence ID" value="AEE76234.1"/>
    <property type="molecule type" value="Genomic_DNA"/>
</dbReference>
<dbReference type="EMBL" id="AY062725">
    <property type="protein sequence ID" value="AAL32803.1"/>
    <property type="molecule type" value="mRNA"/>
</dbReference>
<dbReference type="EMBL" id="AY093350">
    <property type="protein sequence ID" value="AAM13349.1"/>
    <property type="molecule type" value="mRNA"/>
</dbReference>
<dbReference type="RefSeq" id="NP_566633.1">
    <property type="nucleotide sequence ID" value="NM_112826.4"/>
</dbReference>
<dbReference type="SMR" id="Q9LT78"/>
<dbReference type="FunCoup" id="Q9LT78">
    <property type="interactions" value="285"/>
</dbReference>
<dbReference type="IntAct" id="Q9LT78">
    <property type="interactions" value="3"/>
</dbReference>
<dbReference type="STRING" id="3702.Q9LT78"/>
<dbReference type="MEROPS" id="C01.029"/>
<dbReference type="GlyCosmos" id="Q9LT78">
    <property type="glycosylation" value="1 site, No reported glycans"/>
</dbReference>
<dbReference type="GlyGen" id="Q9LT78">
    <property type="glycosylation" value="1 site"/>
</dbReference>
<dbReference type="PaxDb" id="3702-AT3G19390.1"/>
<dbReference type="ProteomicsDB" id="236222"/>
<dbReference type="EnsemblPlants" id="AT3G19390.1">
    <property type="protein sequence ID" value="AT3G19390.1"/>
    <property type="gene ID" value="AT3G19390"/>
</dbReference>
<dbReference type="GeneID" id="821473"/>
<dbReference type="Gramene" id="AT3G19390.1">
    <property type="protein sequence ID" value="AT3G19390.1"/>
    <property type="gene ID" value="AT3G19390"/>
</dbReference>
<dbReference type="KEGG" id="ath:AT3G19390"/>
<dbReference type="Araport" id="AT3G19390"/>
<dbReference type="TAIR" id="AT3G19390"/>
<dbReference type="eggNOG" id="KOG1543">
    <property type="taxonomic scope" value="Eukaryota"/>
</dbReference>
<dbReference type="eggNOG" id="KOG4296">
    <property type="taxonomic scope" value="Eukaryota"/>
</dbReference>
<dbReference type="HOGENOM" id="CLU_012184_0_1_1"/>
<dbReference type="InParanoid" id="Q9LT78"/>
<dbReference type="OMA" id="CNTRAGT"/>
<dbReference type="PhylomeDB" id="Q9LT78"/>
<dbReference type="PRO" id="PR:Q9LT78"/>
<dbReference type="Proteomes" id="UP000006548">
    <property type="component" value="Chromosome 3"/>
</dbReference>
<dbReference type="ExpressionAtlas" id="Q9LT78">
    <property type="expression patterns" value="baseline and differential"/>
</dbReference>
<dbReference type="GO" id="GO:0008234">
    <property type="term" value="F:cysteine-type peptidase activity"/>
    <property type="evidence" value="ECO:0007669"/>
    <property type="project" value="UniProtKB-KW"/>
</dbReference>
<dbReference type="GO" id="GO:0006508">
    <property type="term" value="P:proteolysis"/>
    <property type="evidence" value="ECO:0007669"/>
    <property type="project" value="UniProtKB-KW"/>
</dbReference>
<dbReference type="CDD" id="cd02248">
    <property type="entry name" value="Peptidase_C1A"/>
    <property type="match status" value="1"/>
</dbReference>
<dbReference type="FunFam" id="2.10.25.160:FF:000002">
    <property type="entry name" value="Cysteine protease 1"/>
    <property type="match status" value="1"/>
</dbReference>
<dbReference type="FunFam" id="3.90.70.10:FF:000068">
    <property type="entry name" value="Cysteine protease 1"/>
    <property type="match status" value="1"/>
</dbReference>
<dbReference type="Gene3D" id="3.90.70.10">
    <property type="entry name" value="Cysteine proteinases"/>
    <property type="match status" value="1"/>
</dbReference>
<dbReference type="Gene3D" id="2.10.25.160">
    <property type="entry name" value="Granulin"/>
    <property type="match status" value="1"/>
</dbReference>
<dbReference type="InterPro" id="IPR000118">
    <property type="entry name" value="Granulin"/>
</dbReference>
<dbReference type="InterPro" id="IPR037277">
    <property type="entry name" value="Granulin_sf"/>
</dbReference>
<dbReference type="InterPro" id="IPR038765">
    <property type="entry name" value="Papain-like_cys_pep_sf"/>
</dbReference>
<dbReference type="InterPro" id="IPR025661">
    <property type="entry name" value="Pept_asp_AS"/>
</dbReference>
<dbReference type="InterPro" id="IPR000169">
    <property type="entry name" value="Pept_cys_AS"/>
</dbReference>
<dbReference type="InterPro" id="IPR025660">
    <property type="entry name" value="Pept_his_AS"/>
</dbReference>
<dbReference type="InterPro" id="IPR013128">
    <property type="entry name" value="Peptidase_C1A"/>
</dbReference>
<dbReference type="InterPro" id="IPR000668">
    <property type="entry name" value="Peptidase_C1A_C"/>
</dbReference>
<dbReference type="InterPro" id="IPR039417">
    <property type="entry name" value="Peptidase_C1A_papain-like"/>
</dbReference>
<dbReference type="InterPro" id="IPR013201">
    <property type="entry name" value="Prot_inhib_I29"/>
</dbReference>
<dbReference type="PANTHER" id="PTHR12411">
    <property type="entry name" value="CYSTEINE PROTEASE FAMILY C1-RELATED"/>
    <property type="match status" value="1"/>
</dbReference>
<dbReference type="Pfam" id="PF00396">
    <property type="entry name" value="Granulin"/>
    <property type="match status" value="1"/>
</dbReference>
<dbReference type="Pfam" id="PF08246">
    <property type="entry name" value="Inhibitor_I29"/>
    <property type="match status" value="1"/>
</dbReference>
<dbReference type="Pfam" id="PF00112">
    <property type="entry name" value="Peptidase_C1"/>
    <property type="match status" value="1"/>
</dbReference>
<dbReference type="PRINTS" id="PR00705">
    <property type="entry name" value="PAPAIN"/>
</dbReference>
<dbReference type="SMART" id="SM00277">
    <property type="entry name" value="GRAN"/>
    <property type="match status" value="1"/>
</dbReference>
<dbReference type="SMART" id="SM00848">
    <property type="entry name" value="Inhibitor_I29"/>
    <property type="match status" value="1"/>
</dbReference>
<dbReference type="SMART" id="SM00645">
    <property type="entry name" value="Pept_C1"/>
    <property type="match status" value="1"/>
</dbReference>
<dbReference type="SUPFAM" id="SSF54001">
    <property type="entry name" value="Cysteine proteinases"/>
    <property type="match status" value="1"/>
</dbReference>
<dbReference type="SUPFAM" id="SSF57277">
    <property type="entry name" value="Granulin repeat"/>
    <property type="match status" value="1"/>
</dbReference>
<dbReference type="PROSITE" id="PS00640">
    <property type="entry name" value="THIOL_PROTEASE_ASN"/>
    <property type="match status" value="1"/>
</dbReference>
<dbReference type="PROSITE" id="PS00139">
    <property type="entry name" value="THIOL_PROTEASE_CYS"/>
    <property type="match status" value="1"/>
</dbReference>
<dbReference type="PROSITE" id="PS00639">
    <property type="entry name" value="THIOL_PROTEASE_HIS"/>
    <property type="match status" value="1"/>
</dbReference>
<name>RD21C_ARATH</name>
<evidence type="ECO:0000250" key="1">
    <source>
        <dbReference type="UniProtKB" id="P00785"/>
    </source>
</evidence>
<evidence type="ECO:0000250" key="2">
    <source>
        <dbReference type="UniProtKB" id="P25777"/>
    </source>
</evidence>
<evidence type="ECO:0000250" key="3">
    <source>
        <dbReference type="UniProtKB" id="P43297"/>
    </source>
</evidence>
<evidence type="ECO:0000250" key="4">
    <source>
        <dbReference type="UniProtKB" id="P80884"/>
    </source>
</evidence>
<evidence type="ECO:0000250" key="5">
    <source>
        <dbReference type="UniProtKB" id="P84346"/>
    </source>
</evidence>
<evidence type="ECO:0000250" key="6">
    <source>
        <dbReference type="UniProtKB" id="V5LU01"/>
    </source>
</evidence>
<evidence type="ECO:0000255" key="7"/>
<evidence type="ECO:0000255" key="8">
    <source>
        <dbReference type="PROSITE-ProRule" id="PRU00498"/>
    </source>
</evidence>
<evidence type="ECO:0000255" key="9">
    <source>
        <dbReference type="PROSITE-ProRule" id="PRU10088"/>
    </source>
</evidence>
<evidence type="ECO:0000255" key="10">
    <source>
        <dbReference type="PROSITE-ProRule" id="PRU10089"/>
    </source>
</evidence>
<evidence type="ECO:0000255" key="11">
    <source>
        <dbReference type="PROSITE-ProRule" id="PRU10090"/>
    </source>
</evidence>
<evidence type="ECO:0000269" key="12">
    <source>
    </source>
</evidence>
<evidence type="ECO:0000305" key="13"/>
<evidence type="ECO:0000312" key="14">
    <source>
        <dbReference type="Araport" id="AT3G19390"/>
    </source>
</evidence>
<evidence type="ECO:0000312" key="15">
    <source>
        <dbReference type="EMBL" id="BAB02463.1"/>
    </source>
</evidence>
<accession>Q9LT78</accession>
<keyword id="KW-1015">Disulfide bond</keyword>
<keyword id="KW-0325">Glycoprotein</keyword>
<keyword id="KW-0378">Hydrolase</keyword>
<keyword id="KW-0645">Protease</keyword>
<keyword id="KW-1185">Reference proteome</keyword>
<keyword id="KW-0732">Signal</keyword>
<keyword id="KW-0788">Thiol protease</keyword>
<keyword id="KW-0865">Zymogen</keyword>
<reference key="1">
    <citation type="journal article" date="2000" name="DNA Res.">
        <title>Structural analysis of Arabidopsis thaliana chromosome 3. I. Sequence features of the regions of 4,504,864 bp covered by sixty P1 and TAC clones.</title>
        <authorList>
            <person name="Sato S."/>
            <person name="Nakamura Y."/>
            <person name="Kaneko T."/>
            <person name="Katoh T."/>
            <person name="Asamizu E."/>
            <person name="Tabata S."/>
        </authorList>
    </citation>
    <scope>NUCLEOTIDE SEQUENCE [LARGE SCALE GENOMIC DNA]</scope>
    <source>
        <strain>cv. Columbia</strain>
    </source>
</reference>
<reference key="2">
    <citation type="journal article" date="2017" name="Plant J.">
        <title>Araport11: a complete reannotation of the Arabidopsis thaliana reference genome.</title>
        <authorList>
            <person name="Cheng C.Y."/>
            <person name="Krishnakumar V."/>
            <person name="Chan A.P."/>
            <person name="Thibaud-Nissen F."/>
            <person name="Schobel S."/>
            <person name="Town C.D."/>
        </authorList>
    </citation>
    <scope>GENOME REANNOTATION</scope>
    <source>
        <strain>cv. Columbia</strain>
    </source>
</reference>
<reference key="3">
    <citation type="journal article" date="2003" name="Science">
        <title>Empirical analysis of transcriptional activity in the Arabidopsis genome.</title>
        <authorList>
            <person name="Yamada K."/>
            <person name="Lim J."/>
            <person name="Dale J.M."/>
            <person name="Chen H."/>
            <person name="Shinn P."/>
            <person name="Palm C.J."/>
            <person name="Southwick A.M."/>
            <person name="Wu H.C."/>
            <person name="Kim C.J."/>
            <person name="Nguyen M."/>
            <person name="Pham P.K."/>
            <person name="Cheuk R.F."/>
            <person name="Karlin-Newmann G."/>
            <person name="Liu S.X."/>
            <person name="Lam B."/>
            <person name="Sakano H."/>
            <person name="Wu T."/>
            <person name="Yu G."/>
            <person name="Miranda M."/>
            <person name="Quach H.L."/>
            <person name="Tripp M."/>
            <person name="Chang C.H."/>
            <person name="Lee J.M."/>
            <person name="Toriumi M.J."/>
            <person name="Chan M.M."/>
            <person name="Tang C.C."/>
            <person name="Onodera C.S."/>
            <person name="Deng J.M."/>
            <person name="Akiyama K."/>
            <person name="Ansari Y."/>
            <person name="Arakawa T."/>
            <person name="Banh J."/>
            <person name="Banno F."/>
            <person name="Bowser L."/>
            <person name="Brooks S.Y."/>
            <person name="Carninci P."/>
            <person name="Chao Q."/>
            <person name="Choy N."/>
            <person name="Enju A."/>
            <person name="Goldsmith A.D."/>
            <person name="Gurjal M."/>
            <person name="Hansen N.F."/>
            <person name="Hayashizaki Y."/>
            <person name="Johnson-Hopson C."/>
            <person name="Hsuan V.W."/>
            <person name="Iida K."/>
            <person name="Karnes M."/>
            <person name="Khan S."/>
            <person name="Koesema E."/>
            <person name="Ishida J."/>
            <person name="Jiang P.X."/>
            <person name="Jones T."/>
            <person name="Kawai J."/>
            <person name="Kamiya A."/>
            <person name="Meyers C."/>
            <person name="Nakajima M."/>
            <person name="Narusaka M."/>
            <person name="Seki M."/>
            <person name="Sakurai T."/>
            <person name="Satou M."/>
            <person name="Tamse R."/>
            <person name="Vaysberg M."/>
            <person name="Wallender E.K."/>
            <person name="Wong C."/>
            <person name="Yamamura Y."/>
            <person name="Yuan S."/>
            <person name="Shinozaki K."/>
            <person name="Davis R.W."/>
            <person name="Theologis A."/>
            <person name="Ecker J.R."/>
        </authorList>
    </citation>
    <scope>NUCLEOTIDE SEQUENCE [LARGE SCALE MRNA]</scope>
    <source>
        <strain>cv. Columbia</strain>
    </source>
</reference>
<reference key="4">
    <citation type="journal article" date="2015" name="J. Exp. Bot.">
        <title>A Kunitz-type protease inhibitor regulates programmed cell death during flower development in Arabidopsis thaliana.</title>
        <authorList>
            <person name="Boex-Fontvieille E."/>
            <person name="Rustgi S."/>
            <person name="Reinbothe S."/>
            <person name="Reinbothe C."/>
        </authorList>
    </citation>
    <scope>INTERACTION WITH WSCP</scope>
</reference>
<feature type="signal peptide" evidence="7">
    <location>
        <begin position="1"/>
        <end position="29"/>
    </location>
</feature>
<feature type="propeptide" id="PRO_0000436329" description="Activation peptide" evidence="1">
    <location>
        <begin position="30"/>
        <end position="128"/>
    </location>
</feature>
<feature type="chain" id="PRO_5006529498" description="Probable cysteine protease RD21C">
    <location>
        <begin position="129"/>
        <end position="345"/>
    </location>
</feature>
<feature type="propeptide" id="PRO_0000436330" description="Removed in mature form" evidence="6">
    <location>
        <begin position="346"/>
        <end position="452"/>
    </location>
</feature>
<feature type="active site" evidence="9">
    <location>
        <position position="153"/>
    </location>
</feature>
<feature type="active site" evidence="10">
    <location>
        <position position="290"/>
    </location>
</feature>
<feature type="active site" evidence="11">
    <location>
        <position position="310"/>
    </location>
</feature>
<feature type="glycosylation site" description="N-linked (GlcNAc...) asparagine" evidence="8">
    <location>
        <position position="82"/>
    </location>
</feature>
<feature type="disulfide bond" evidence="5">
    <location>
        <begin position="150"/>
        <end position="192"/>
    </location>
</feature>
<feature type="disulfide bond" evidence="5">
    <location>
        <begin position="184"/>
        <end position="226"/>
    </location>
</feature>
<feature type="disulfide bond" evidence="5">
    <location>
        <begin position="284"/>
        <end position="335"/>
    </location>
</feature>
<feature type="disulfide bond" evidence="2">
    <location>
        <begin position="363"/>
        <end position="375"/>
    </location>
</feature>
<feature type="disulfide bond" evidence="2">
    <location>
        <begin position="369"/>
        <end position="390"/>
    </location>
</feature>
<proteinExistence type="evidence at protein level"/>
<sequence length="452" mass="49308">MATSIKSITLALLIFSVLLISLSLGSVTATETTRNEAEARRMYERWLVENRKNYNGLGEKERRFEIFKDNLKFVEEHSSIPNRTYEVGLTRFADLTNDEFRAIYLRSKMERTRVPVKGEKYLYKVGDSLPDAIDWRAKGAVNPVKDQGSCGSCWAFSAIGAVEGINQIKTGELISLSEQELVDCDTSYNDGCGGGLMDYAFKFIIENGGIDTEEDYPYIATDVNVCNSDKKNTRVVTIDGYEDVPQNDEKSLKKALANQPISVAIEAGGRAFQLYTSGVFTGTCGTSLDHGVVAVGYGSEGGQDYWIVRNSWGSNWGESGYFKLERNIKESSGKCGVAMMASYPTKSSGSNPPKPPAPSPVVCDKSNTCPAKSTCCCLYEYNGKCYSWGCCPYESATCCDDGSSCCPQSYPVCDLKANTCRMKGNSPLSIKALTRGPAIATTKSTNMLVGSA</sequence>